<keyword id="KW-0249">Electron transport</keyword>
<keyword id="KW-0349">Heme</keyword>
<keyword id="KW-0408">Iron</keyword>
<keyword id="KW-0472">Membrane</keyword>
<keyword id="KW-0479">Metal-binding</keyword>
<keyword id="KW-0496">Mitochondrion</keyword>
<keyword id="KW-0999">Mitochondrion inner membrane</keyword>
<keyword id="KW-0679">Respiratory chain</keyword>
<keyword id="KW-0812">Transmembrane</keyword>
<keyword id="KW-1133">Transmembrane helix</keyword>
<keyword id="KW-0813">Transport</keyword>
<keyword id="KW-0830">Ubiquinone</keyword>
<gene>
    <name type="primary">MT-CYB</name>
    <name type="synonym">COB</name>
    <name type="synonym">CYTB</name>
    <name type="synonym">MTCYB</name>
</gene>
<evidence type="ECO:0000250" key="1"/>
<evidence type="ECO:0000250" key="2">
    <source>
        <dbReference type="UniProtKB" id="P00157"/>
    </source>
</evidence>
<evidence type="ECO:0000255" key="3">
    <source>
        <dbReference type="PROSITE-ProRule" id="PRU00967"/>
    </source>
</evidence>
<evidence type="ECO:0000255" key="4">
    <source>
        <dbReference type="PROSITE-ProRule" id="PRU00968"/>
    </source>
</evidence>
<geneLocation type="mitochondrion"/>
<accession>Q1MWK0</accession>
<protein>
    <recommendedName>
        <fullName>Cytochrome b</fullName>
    </recommendedName>
    <alternativeName>
        <fullName>Complex III subunit 3</fullName>
    </alternativeName>
    <alternativeName>
        <fullName>Complex III subunit III</fullName>
    </alternativeName>
    <alternativeName>
        <fullName>Cytochrome b-c1 complex subunit 3</fullName>
    </alternativeName>
    <alternativeName>
        <fullName>Ubiquinol-cytochrome-c reductase complex cytochrome b subunit</fullName>
    </alternativeName>
</protein>
<reference key="1">
    <citation type="journal article" date="2006" name="Genes Genet. Syst.">
        <title>Phylogenetic analysis of diprotodontian marsupials based on complete mitochondrial genomes.</title>
        <authorList>
            <person name="Munemasa M."/>
            <person name="Nikaido M."/>
            <person name="Donnellan S."/>
            <person name="Austin C.C."/>
            <person name="Okada N."/>
            <person name="Hasegawa M."/>
        </authorList>
    </citation>
    <scope>NUCLEOTIDE SEQUENCE [GENOMIC DNA]</scope>
    <source>
        <tissue>Liver</tissue>
    </source>
</reference>
<sequence>MTNLRKTHPLMKIINHSFIDLPAPSNISAWWNFGSLLGICLTIQIMTGLFLAMHYTSDTSTAFSSVAHICRDVNYGWLIRNLHANGASMFFMCLFLHVGRGLYYGSYMYKETWNIGVILLLTVMATAFVGYVLPWGQMSFWGATVITNLLSAIPYIGTTLVEWIWGGFSVDKATLTRFFAFHFILPFIITALVIVHLLFLHETGSNNPSGINSNSDKIPFHPYYTIKDMLGLVLMLLSLLTLSLFSPDLLGDPDNFSPANPLNTPPHIKPEWYFLFAYAILRSIPNKLGGVLALLASILILLIIPLLHTSKQRSLMFRPISQTLFWLLTANLLTLTWIGGQPVEQPFIIIGQLASIIYFLLIMVFMPLAGLLENYMLKPKW</sequence>
<comment type="function">
    <text evidence="2">Component of the ubiquinol-cytochrome c reductase complex (complex III or cytochrome b-c1 complex) that is part of the mitochondrial respiratory chain. The b-c1 complex mediates electron transfer from ubiquinol to cytochrome c. Contributes to the generation of a proton gradient across the mitochondrial membrane that is then used for ATP synthesis.</text>
</comment>
<comment type="cofactor">
    <cofactor evidence="2">
        <name>heme b</name>
        <dbReference type="ChEBI" id="CHEBI:60344"/>
    </cofactor>
    <text evidence="2">Binds 2 heme b groups non-covalently.</text>
</comment>
<comment type="subunit">
    <text evidence="2">The cytochrome bc1 complex contains 11 subunits: 3 respiratory subunits (MT-CYB, CYC1 and UQCRFS1), 2 core proteins (UQCRC1 and UQCRC2) and 6 low-molecular weight proteins (UQCRH/QCR6, UQCRB/QCR7, UQCRQ/QCR8, UQCR10/QCR9, UQCR11/QCR10 and a cleavage product of UQCRFS1). This cytochrome bc1 complex then forms a dimer.</text>
</comment>
<comment type="subcellular location">
    <subcellularLocation>
        <location evidence="2">Mitochondrion inner membrane</location>
        <topology evidence="2">Multi-pass membrane protein</topology>
    </subcellularLocation>
</comment>
<comment type="miscellaneous">
    <text evidence="1">Heme 1 (or BL or b562) is low-potential and absorbs at about 562 nm, and heme 2 (or BH or b566) is high-potential and absorbs at about 566 nm.</text>
</comment>
<comment type="similarity">
    <text evidence="3 4">Belongs to the cytochrome b family.</text>
</comment>
<comment type="caution">
    <text evidence="2">The full-length protein contains only eight transmembrane helices, not nine as predicted by bioinformatics tools.</text>
</comment>
<proteinExistence type="inferred from homology"/>
<name>CYB_DISPE</name>
<dbReference type="EMBL" id="AB241052">
    <property type="protein sequence ID" value="BAE93966.1"/>
    <property type="molecule type" value="Genomic_DNA"/>
</dbReference>
<dbReference type="RefSeq" id="YP_637178.1">
    <property type="nucleotide sequence ID" value="NC_008145.1"/>
</dbReference>
<dbReference type="SMR" id="Q1MWK0"/>
<dbReference type="GeneID" id="4108271"/>
<dbReference type="CTD" id="4519"/>
<dbReference type="GO" id="GO:0005743">
    <property type="term" value="C:mitochondrial inner membrane"/>
    <property type="evidence" value="ECO:0007669"/>
    <property type="project" value="UniProtKB-SubCell"/>
</dbReference>
<dbReference type="GO" id="GO:0045275">
    <property type="term" value="C:respiratory chain complex III"/>
    <property type="evidence" value="ECO:0007669"/>
    <property type="project" value="InterPro"/>
</dbReference>
<dbReference type="GO" id="GO:0046872">
    <property type="term" value="F:metal ion binding"/>
    <property type="evidence" value="ECO:0007669"/>
    <property type="project" value="UniProtKB-KW"/>
</dbReference>
<dbReference type="GO" id="GO:0008121">
    <property type="term" value="F:ubiquinol-cytochrome-c reductase activity"/>
    <property type="evidence" value="ECO:0007669"/>
    <property type="project" value="InterPro"/>
</dbReference>
<dbReference type="GO" id="GO:0006122">
    <property type="term" value="P:mitochondrial electron transport, ubiquinol to cytochrome c"/>
    <property type="evidence" value="ECO:0007669"/>
    <property type="project" value="TreeGrafter"/>
</dbReference>
<dbReference type="CDD" id="cd00290">
    <property type="entry name" value="cytochrome_b_C"/>
    <property type="match status" value="1"/>
</dbReference>
<dbReference type="CDD" id="cd00284">
    <property type="entry name" value="Cytochrome_b_N"/>
    <property type="match status" value="1"/>
</dbReference>
<dbReference type="FunFam" id="1.20.810.10:FF:000002">
    <property type="entry name" value="Cytochrome b"/>
    <property type="match status" value="1"/>
</dbReference>
<dbReference type="Gene3D" id="1.20.810.10">
    <property type="entry name" value="Cytochrome Bc1 Complex, Chain C"/>
    <property type="match status" value="1"/>
</dbReference>
<dbReference type="InterPro" id="IPR005798">
    <property type="entry name" value="Cyt_b/b6_C"/>
</dbReference>
<dbReference type="InterPro" id="IPR036150">
    <property type="entry name" value="Cyt_b/b6_C_sf"/>
</dbReference>
<dbReference type="InterPro" id="IPR005797">
    <property type="entry name" value="Cyt_b/b6_N"/>
</dbReference>
<dbReference type="InterPro" id="IPR027387">
    <property type="entry name" value="Cytb/b6-like_sf"/>
</dbReference>
<dbReference type="InterPro" id="IPR030689">
    <property type="entry name" value="Cytochrome_b"/>
</dbReference>
<dbReference type="InterPro" id="IPR048260">
    <property type="entry name" value="Cytochrome_b_C_euk/bac"/>
</dbReference>
<dbReference type="InterPro" id="IPR048259">
    <property type="entry name" value="Cytochrome_b_N_euk/bac"/>
</dbReference>
<dbReference type="InterPro" id="IPR016174">
    <property type="entry name" value="Di-haem_cyt_TM"/>
</dbReference>
<dbReference type="PANTHER" id="PTHR19271">
    <property type="entry name" value="CYTOCHROME B"/>
    <property type="match status" value="1"/>
</dbReference>
<dbReference type="PANTHER" id="PTHR19271:SF16">
    <property type="entry name" value="CYTOCHROME B"/>
    <property type="match status" value="1"/>
</dbReference>
<dbReference type="Pfam" id="PF00032">
    <property type="entry name" value="Cytochrom_B_C"/>
    <property type="match status" value="1"/>
</dbReference>
<dbReference type="Pfam" id="PF00033">
    <property type="entry name" value="Cytochrome_B"/>
    <property type="match status" value="1"/>
</dbReference>
<dbReference type="PIRSF" id="PIRSF038885">
    <property type="entry name" value="COB"/>
    <property type="match status" value="1"/>
</dbReference>
<dbReference type="SUPFAM" id="SSF81648">
    <property type="entry name" value="a domain/subunit of cytochrome bc1 complex (Ubiquinol-cytochrome c reductase)"/>
    <property type="match status" value="1"/>
</dbReference>
<dbReference type="SUPFAM" id="SSF81342">
    <property type="entry name" value="Transmembrane di-heme cytochromes"/>
    <property type="match status" value="1"/>
</dbReference>
<dbReference type="PROSITE" id="PS51003">
    <property type="entry name" value="CYTB_CTER"/>
    <property type="match status" value="1"/>
</dbReference>
<dbReference type="PROSITE" id="PS51002">
    <property type="entry name" value="CYTB_NTER"/>
    <property type="match status" value="1"/>
</dbReference>
<organism>
    <name type="scientific">Distoechurus pennatus</name>
    <name type="common">Feather-tailed possum</name>
    <dbReference type="NCBI Taxonomy" id="38614"/>
    <lineage>
        <taxon>Eukaryota</taxon>
        <taxon>Metazoa</taxon>
        <taxon>Chordata</taxon>
        <taxon>Craniata</taxon>
        <taxon>Vertebrata</taxon>
        <taxon>Euteleostomi</taxon>
        <taxon>Mammalia</taxon>
        <taxon>Metatheria</taxon>
        <taxon>Diprotodontia</taxon>
        <taxon>Acrobatidae</taxon>
        <taxon>Distoechurus</taxon>
    </lineage>
</organism>
<feature type="chain" id="PRO_0000257893" description="Cytochrome b">
    <location>
        <begin position="1"/>
        <end position="381"/>
    </location>
</feature>
<feature type="transmembrane region" description="Helical" evidence="2">
    <location>
        <begin position="33"/>
        <end position="53"/>
    </location>
</feature>
<feature type="transmembrane region" description="Helical" evidence="2">
    <location>
        <begin position="77"/>
        <end position="98"/>
    </location>
</feature>
<feature type="transmembrane region" description="Helical" evidence="2">
    <location>
        <begin position="113"/>
        <end position="133"/>
    </location>
</feature>
<feature type="transmembrane region" description="Helical" evidence="2">
    <location>
        <begin position="178"/>
        <end position="198"/>
    </location>
</feature>
<feature type="transmembrane region" description="Helical" evidence="2">
    <location>
        <begin position="226"/>
        <end position="246"/>
    </location>
</feature>
<feature type="transmembrane region" description="Helical" evidence="2">
    <location>
        <begin position="288"/>
        <end position="308"/>
    </location>
</feature>
<feature type="transmembrane region" description="Helical" evidence="2">
    <location>
        <begin position="320"/>
        <end position="340"/>
    </location>
</feature>
<feature type="transmembrane region" description="Helical" evidence="2">
    <location>
        <begin position="347"/>
        <end position="367"/>
    </location>
</feature>
<feature type="binding site" description="axial binding residue" evidence="2">
    <location>
        <position position="83"/>
    </location>
    <ligand>
        <name>heme b</name>
        <dbReference type="ChEBI" id="CHEBI:60344"/>
        <label>b562</label>
    </ligand>
    <ligandPart>
        <name>Fe</name>
        <dbReference type="ChEBI" id="CHEBI:18248"/>
    </ligandPart>
</feature>
<feature type="binding site" description="axial binding residue" evidence="2">
    <location>
        <position position="97"/>
    </location>
    <ligand>
        <name>heme b</name>
        <dbReference type="ChEBI" id="CHEBI:60344"/>
        <label>b566</label>
    </ligand>
    <ligandPart>
        <name>Fe</name>
        <dbReference type="ChEBI" id="CHEBI:18248"/>
    </ligandPart>
</feature>
<feature type="binding site" description="axial binding residue" evidence="2">
    <location>
        <position position="182"/>
    </location>
    <ligand>
        <name>heme b</name>
        <dbReference type="ChEBI" id="CHEBI:60344"/>
        <label>b562</label>
    </ligand>
    <ligandPart>
        <name>Fe</name>
        <dbReference type="ChEBI" id="CHEBI:18248"/>
    </ligandPart>
</feature>
<feature type="binding site" description="axial binding residue" evidence="2">
    <location>
        <position position="196"/>
    </location>
    <ligand>
        <name>heme b</name>
        <dbReference type="ChEBI" id="CHEBI:60344"/>
        <label>b566</label>
    </ligand>
    <ligandPart>
        <name>Fe</name>
        <dbReference type="ChEBI" id="CHEBI:18248"/>
    </ligandPart>
</feature>
<feature type="binding site" evidence="2">
    <location>
        <position position="201"/>
    </location>
    <ligand>
        <name>a ubiquinone</name>
        <dbReference type="ChEBI" id="CHEBI:16389"/>
    </ligand>
</feature>